<reference key="1">
    <citation type="journal article" date="2007" name="Nat. Biotechnol.">
        <title>Complete genome sequence of the fish pathogen Flavobacterium psychrophilum.</title>
        <authorList>
            <person name="Duchaud E."/>
            <person name="Boussaha M."/>
            <person name="Loux V."/>
            <person name="Bernardet J.-F."/>
            <person name="Michel C."/>
            <person name="Kerouault B."/>
            <person name="Mondot S."/>
            <person name="Nicolas P."/>
            <person name="Bossy R."/>
            <person name="Caron C."/>
            <person name="Bessieres P."/>
            <person name="Gibrat J.-F."/>
            <person name="Claverol S."/>
            <person name="Dumetz F."/>
            <person name="Le Henaff M."/>
            <person name="Benmansour A."/>
        </authorList>
    </citation>
    <scope>NUCLEOTIDE SEQUENCE [LARGE SCALE GENOMIC DNA]</scope>
    <source>
        <strain>ATCC 49511 / DSM 21280 / CIP 103535 / JIP02/86</strain>
    </source>
</reference>
<comment type="function">
    <text evidence="1">Part of the Sec protein translocase complex. Interacts with the SecYEG preprotein conducting channel. Has a central role in coupling the hydrolysis of ATP to the transfer of proteins into and across the cell membrane, serving as an ATP-driven molecular motor driving the stepwise translocation of polypeptide chains across the membrane.</text>
</comment>
<comment type="catalytic activity">
    <reaction evidence="1">
        <text>ATP + H2O + cellular proteinSide 1 = ADP + phosphate + cellular proteinSide 2.</text>
        <dbReference type="EC" id="7.4.2.8"/>
    </reaction>
</comment>
<comment type="subunit">
    <text evidence="1">Monomer and homodimer. Part of the essential Sec protein translocation apparatus which comprises SecA, SecYEG and auxiliary proteins SecDF. Other proteins may also be involved.</text>
</comment>
<comment type="subcellular location">
    <subcellularLocation>
        <location evidence="1">Cell inner membrane</location>
        <topology evidence="1">Peripheral membrane protein</topology>
        <orientation evidence="1">Cytoplasmic side</orientation>
    </subcellularLocation>
    <subcellularLocation>
        <location evidence="1">Cytoplasm</location>
    </subcellularLocation>
    <text evidence="1">Distribution is 50-50.</text>
</comment>
<comment type="similarity">
    <text evidence="1">Belongs to the SecA family.</text>
</comment>
<sequence>MSFINNILKVFVGDKSQKDVKAIQPIIAKIRTLENSLSNLSHDELRAKTVYFKDIIKQARAEKDTKIENLKLEVEAIQDIDAREDVYAQIDILEKEAYEISEKTLNEILPEAFAVIKETAKRFKENKQITVTATAKDRELSATKSYINLVGDTAVWANSWSAAGKEITWDMIHYDVQLIGGVVLHQGKISEMQTGEGKTLVATLPLYLNALTGNGVHLVTVNDYLAKRDSAWKAPLFEFHGLMVDCIDLHQPNSDARRKAYDADITYGTNNEFGFDYLRDNMAHSPEDLVQRKHNFAIVDEVDSVLIDDARTPLIISGQVVDGDRHEFTELKPKIENLVNIQRQLANGFLTEAKRLIKEGNTKDGGFQLLRAHRALPKNKALIKFLSEEGIKALLQKTENQYMSDNNREMPKVDEALYFVIEEKNNQVELTDSGIEIMSKDTEDTFFVLPDIGTEIARIEKLNLSTEEQGEQKEKLFQDFSVKSERIHTLTQLLKAYTLFEKDTEYVLMDNKVMIVDEQTGRIMDGRRYSDGLHQAIEAKENVKIEDATQTYATVTLQNYFRMYSKLAGMTGTAVTEAGELWEIYKLDVVEIPTNRGMSRIDKEDLIYRSVREKFNAVIEDVVGLSQSGRPVLIGTTSVEISELLSRMLKMRNIPHNVLNAKMHKQEAQIVEEAGKPGVVTIATNMAGRGTDIKLTAEVKAAGGLAIIGTERHDSRRVDRQLRGRAGRQGDPGSSQFYVSLEDNLMRLFGSDRVAKIMDRMGLQEGEVIQHSMMTKSIERAQKKVEENNFGTRKRLLEYDDVMNSQREVVYKRRRHALHGERLKLDIANMMYDTCEVIVEKNKLTGDFKNFEFELIKNLSITSPVTQADFAKLSDIELTGKTYKAASEYYTEKNIRDAHEAFPIIRNVYENPGNSFERIIVPFTDGIKSLNVVTDLKKAYESQGKQLVADFEKNITLAIVDDAWKKHLRKMDEMKQSVQLAVHEQKDPLLIYKFEAFKLFKNMLDGINKEVISFLFKGDLPQQQNNIQEATQIRQKENYIESKDEILNIEEQAERNHEAGQTQQHQVTETIVRDMPKINRNDTVKIQNVANGQIEELKFKKAEILLNAGTWVLVSE</sequence>
<dbReference type="EC" id="7.4.2.8" evidence="1"/>
<dbReference type="EMBL" id="AM398681">
    <property type="protein sequence ID" value="CAL42686.1"/>
    <property type="molecule type" value="Genomic_DNA"/>
</dbReference>
<dbReference type="RefSeq" id="WP_011962742.1">
    <property type="nucleotide sequence ID" value="NC_009613.3"/>
</dbReference>
<dbReference type="RefSeq" id="YP_001295502.1">
    <property type="nucleotide sequence ID" value="NC_009613.3"/>
</dbReference>
<dbReference type="SMR" id="A6GX63"/>
<dbReference type="STRING" id="402612.FP0581"/>
<dbReference type="EnsemblBacteria" id="CAL42686">
    <property type="protein sequence ID" value="CAL42686"/>
    <property type="gene ID" value="FP0581"/>
</dbReference>
<dbReference type="GeneID" id="66552739"/>
<dbReference type="KEGG" id="fps:FP0581"/>
<dbReference type="PATRIC" id="fig|402612.5.peg.593"/>
<dbReference type="eggNOG" id="COG0653">
    <property type="taxonomic scope" value="Bacteria"/>
</dbReference>
<dbReference type="HOGENOM" id="CLU_005314_3_0_10"/>
<dbReference type="OrthoDB" id="9805579at2"/>
<dbReference type="Proteomes" id="UP000006394">
    <property type="component" value="Chromosome"/>
</dbReference>
<dbReference type="GO" id="GO:0031522">
    <property type="term" value="C:cell envelope Sec protein transport complex"/>
    <property type="evidence" value="ECO:0007669"/>
    <property type="project" value="TreeGrafter"/>
</dbReference>
<dbReference type="GO" id="GO:0005829">
    <property type="term" value="C:cytosol"/>
    <property type="evidence" value="ECO:0007669"/>
    <property type="project" value="TreeGrafter"/>
</dbReference>
<dbReference type="GO" id="GO:0005886">
    <property type="term" value="C:plasma membrane"/>
    <property type="evidence" value="ECO:0007669"/>
    <property type="project" value="UniProtKB-SubCell"/>
</dbReference>
<dbReference type="GO" id="GO:0005524">
    <property type="term" value="F:ATP binding"/>
    <property type="evidence" value="ECO:0007669"/>
    <property type="project" value="UniProtKB-UniRule"/>
</dbReference>
<dbReference type="GO" id="GO:0008564">
    <property type="term" value="F:protein-exporting ATPase activity"/>
    <property type="evidence" value="ECO:0007669"/>
    <property type="project" value="UniProtKB-EC"/>
</dbReference>
<dbReference type="GO" id="GO:0065002">
    <property type="term" value="P:intracellular protein transmembrane transport"/>
    <property type="evidence" value="ECO:0007669"/>
    <property type="project" value="UniProtKB-UniRule"/>
</dbReference>
<dbReference type="GO" id="GO:0017038">
    <property type="term" value="P:protein import"/>
    <property type="evidence" value="ECO:0007669"/>
    <property type="project" value="InterPro"/>
</dbReference>
<dbReference type="GO" id="GO:0006605">
    <property type="term" value="P:protein targeting"/>
    <property type="evidence" value="ECO:0007669"/>
    <property type="project" value="UniProtKB-UniRule"/>
</dbReference>
<dbReference type="GO" id="GO:0043952">
    <property type="term" value="P:protein transport by the Sec complex"/>
    <property type="evidence" value="ECO:0007669"/>
    <property type="project" value="TreeGrafter"/>
</dbReference>
<dbReference type="CDD" id="cd17928">
    <property type="entry name" value="DEXDc_SecA"/>
    <property type="match status" value="1"/>
</dbReference>
<dbReference type="CDD" id="cd18803">
    <property type="entry name" value="SF2_C_secA"/>
    <property type="match status" value="1"/>
</dbReference>
<dbReference type="FunFam" id="3.40.50.300:FF:000246">
    <property type="entry name" value="Preprotein translocase subunit SecA"/>
    <property type="match status" value="1"/>
</dbReference>
<dbReference type="FunFam" id="3.40.50.300:FF:000694">
    <property type="entry name" value="Preprotein translocase subunit SecA"/>
    <property type="match status" value="1"/>
</dbReference>
<dbReference type="Gene3D" id="1.10.3060.10">
    <property type="entry name" value="Helical scaffold and wing domains of SecA"/>
    <property type="match status" value="1"/>
</dbReference>
<dbReference type="Gene3D" id="3.40.50.300">
    <property type="entry name" value="P-loop containing nucleotide triphosphate hydrolases"/>
    <property type="match status" value="3"/>
</dbReference>
<dbReference type="Gene3D" id="3.90.1440.10">
    <property type="entry name" value="SecA, preprotein cross-linking domain"/>
    <property type="match status" value="1"/>
</dbReference>
<dbReference type="HAMAP" id="MF_01382">
    <property type="entry name" value="SecA"/>
    <property type="match status" value="1"/>
</dbReference>
<dbReference type="InterPro" id="IPR014001">
    <property type="entry name" value="Helicase_ATP-bd"/>
</dbReference>
<dbReference type="InterPro" id="IPR001650">
    <property type="entry name" value="Helicase_C-like"/>
</dbReference>
<dbReference type="InterPro" id="IPR027417">
    <property type="entry name" value="P-loop_NTPase"/>
</dbReference>
<dbReference type="InterPro" id="IPR000185">
    <property type="entry name" value="SecA"/>
</dbReference>
<dbReference type="InterPro" id="IPR020937">
    <property type="entry name" value="SecA_CS"/>
</dbReference>
<dbReference type="InterPro" id="IPR011115">
    <property type="entry name" value="SecA_DEAD"/>
</dbReference>
<dbReference type="InterPro" id="IPR014018">
    <property type="entry name" value="SecA_motor_DEAD"/>
</dbReference>
<dbReference type="InterPro" id="IPR011130">
    <property type="entry name" value="SecA_preprotein_X-link_dom"/>
</dbReference>
<dbReference type="InterPro" id="IPR044722">
    <property type="entry name" value="SecA_SF2_C"/>
</dbReference>
<dbReference type="InterPro" id="IPR011116">
    <property type="entry name" value="SecA_Wing/Scaffold"/>
</dbReference>
<dbReference type="InterPro" id="IPR036266">
    <property type="entry name" value="SecA_Wing/Scaffold_sf"/>
</dbReference>
<dbReference type="InterPro" id="IPR036670">
    <property type="entry name" value="SecA_X-link_sf"/>
</dbReference>
<dbReference type="NCBIfam" id="NF009536">
    <property type="entry name" value="PRK12901.1"/>
    <property type="match status" value="1"/>
</dbReference>
<dbReference type="PANTHER" id="PTHR30612:SF0">
    <property type="entry name" value="CHLOROPLAST PROTEIN-TRANSPORTING ATPASE"/>
    <property type="match status" value="1"/>
</dbReference>
<dbReference type="PANTHER" id="PTHR30612">
    <property type="entry name" value="SECA INNER MEMBRANE COMPONENT OF SEC PROTEIN SECRETION SYSTEM"/>
    <property type="match status" value="1"/>
</dbReference>
<dbReference type="Pfam" id="PF21090">
    <property type="entry name" value="P-loop_SecA"/>
    <property type="match status" value="1"/>
</dbReference>
<dbReference type="Pfam" id="PF07517">
    <property type="entry name" value="SecA_DEAD"/>
    <property type="match status" value="1"/>
</dbReference>
<dbReference type="Pfam" id="PF01043">
    <property type="entry name" value="SecA_PP_bind"/>
    <property type="match status" value="1"/>
</dbReference>
<dbReference type="Pfam" id="PF07516">
    <property type="entry name" value="SecA_SW"/>
    <property type="match status" value="1"/>
</dbReference>
<dbReference type="PRINTS" id="PR00906">
    <property type="entry name" value="SECA"/>
</dbReference>
<dbReference type="SMART" id="SM00490">
    <property type="entry name" value="HELICc"/>
    <property type="match status" value="1"/>
</dbReference>
<dbReference type="SMART" id="SM00957">
    <property type="entry name" value="SecA_DEAD"/>
    <property type="match status" value="1"/>
</dbReference>
<dbReference type="SMART" id="SM00958">
    <property type="entry name" value="SecA_PP_bind"/>
    <property type="match status" value="1"/>
</dbReference>
<dbReference type="SUPFAM" id="SSF81886">
    <property type="entry name" value="Helical scaffold and wing domains of SecA"/>
    <property type="match status" value="1"/>
</dbReference>
<dbReference type="SUPFAM" id="SSF52540">
    <property type="entry name" value="P-loop containing nucleoside triphosphate hydrolases"/>
    <property type="match status" value="2"/>
</dbReference>
<dbReference type="SUPFAM" id="SSF81767">
    <property type="entry name" value="Pre-protein crosslinking domain of SecA"/>
    <property type="match status" value="1"/>
</dbReference>
<dbReference type="PROSITE" id="PS01312">
    <property type="entry name" value="SECA"/>
    <property type="match status" value="1"/>
</dbReference>
<dbReference type="PROSITE" id="PS51196">
    <property type="entry name" value="SECA_MOTOR_DEAD"/>
    <property type="match status" value="1"/>
</dbReference>
<gene>
    <name evidence="1" type="primary">secA</name>
    <name type="ordered locus">FP0581</name>
</gene>
<protein>
    <recommendedName>
        <fullName evidence="1">Protein translocase subunit SecA</fullName>
        <ecNumber evidence="1">7.4.2.8</ecNumber>
    </recommendedName>
</protein>
<proteinExistence type="inferred from homology"/>
<organism>
    <name type="scientific">Flavobacterium psychrophilum (strain ATCC 49511 / DSM 21280 / CIP 103535 / JIP02/86)</name>
    <dbReference type="NCBI Taxonomy" id="402612"/>
    <lineage>
        <taxon>Bacteria</taxon>
        <taxon>Pseudomonadati</taxon>
        <taxon>Bacteroidota</taxon>
        <taxon>Flavobacteriia</taxon>
        <taxon>Flavobacteriales</taxon>
        <taxon>Flavobacteriaceae</taxon>
        <taxon>Flavobacterium</taxon>
    </lineage>
</organism>
<accession>A6GX63</accession>
<name>SECA_FLAPJ</name>
<keyword id="KW-0067">ATP-binding</keyword>
<keyword id="KW-0997">Cell inner membrane</keyword>
<keyword id="KW-1003">Cell membrane</keyword>
<keyword id="KW-0963">Cytoplasm</keyword>
<keyword id="KW-0472">Membrane</keyword>
<keyword id="KW-0547">Nucleotide-binding</keyword>
<keyword id="KW-0653">Protein transport</keyword>
<keyword id="KW-1185">Reference proteome</keyword>
<keyword id="KW-1278">Translocase</keyword>
<keyword id="KW-0811">Translocation</keyword>
<keyword id="KW-0813">Transport</keyword>
<evidence type="ECO:0000255" key="1">
    <source>
        <dbReference type="HAMAP-Rule" id="MF_01382"/>
    </source>
</evidence>
<feature type="chain" id="PRO_0000320812" description="Protein translocase subunit SecA">
    <location>
        <begin position="1"/>
        <end position="1116"/>
    </location>
</feature>
<feature type="binding site" evidence="1">
    <location>
        <position position="177"/>
    </location>
    <ligand>
        <name>ATP</name>
        <dbReference type="ChEBI" id="CHEBI:30616"/>
    </ligand>
</feature>
<feature type="binding site" evidence="1">
    <location>
        <begin position="195"/>
        <end position="199"/>
    </location>
    <ligand>
        <name>ATP</name>
        <dbReference type="ChEBI" id="CHEBI:30616"/>
    </ligand>
</feature>
<feature type="binding site" evidence="1">
    <location>
        <position position="692"/>
    </location>
    <ligand>
        <name>ATP</name>
        <dbReference type="ChEBI" id="CHEBI:30616"/>
    </ligand>
</feature>